<protein>
    <recommendedName>
        <fullName>Crossover junction endodeoxyribonuclease RusA</fullName>
        <ecNumber>3.1.21.10</ecNumber>
    </recommendedName>
    <alternativeName>
        <fullName>Holliday junction nuclease RusA</fullName>
    </alternativeName>
    <alternativeName>
        <fullName>Holliday junction resolvase</fullName>
    </alternativeName>
</protein>
<feature type="chain" id="PRO_0000324838" description="Crossover junction endodeoxyribonuclease RusA">
    <location>
        <begin position="1"/>
        <end position="120"/>
    </location>
</feature>
<feature type="region of interest" description="DNA-binding" evidence="1">
    <location>
        <begin position="13"/>
        <end position="16"/>
    </location>
</feature>
<feature type="region of interest" description="DNA-binding" evidence="1">
    <location>
        <begin position="66"/>
        <end position="73"/>
    </location>
</feature>
<feature type="binding site" evidence="1">
    <location>
        <position position="70"/>
    </location>
    <ligand>
        <name>Mg(2+)</name>
        <dbReference type="ChEBI" id="CHEBI:18420"/>
    </ligand>
</feature>
<feature type="binding site" evidence="1">
    <location>
        <position position="72"/>
    </location>
    <ligand>
        <name>Mg(2+)</name>
        <dbReference type="ChEBI" id="CHEBI:18420"/>
    </ligand>
</feature>
<feature type="binding site" evidence="1">
    <location>
        <position position="91"/>
    </location>
    <ligand>
        <name>Mg(2+)</name>
        <dbReference type="ChEBI" id="CHEBI:18420"/>
    </ligand>
</feature>
<name>RUSA_SHISS</name>
<comment type="function">
    <text evidence="1">Endonuclease that resolves Holliday junction intermediates made during homologous genetic recombination and DNA repair. Exhibits sequence and structure-selective cleavage of four-way DNA junctions, where it introduces symmetrical nicks in two strands of the same polarity at the 5' side of CC dinucleotides. Corrects the defects in genetic recombination and DNA repair associated with inactivation of RuvAB or RuvC (By similarity).</text>
</comment>
<comment type="catalytic activity">
    <reaction>
        <text>Endonucleolytic cleavage at a junction such as a reciprocal single-stranded crossover between two homologous DNA duplexes (Holliday junction).</text>
        <dbReference type="EC" id="3.1.21.10"/>
    </reaction>
</comment>
<comment type="cofactor">
    <cofactor evidence="1">
        <name>Mg(2+)</name>
        <dbReference type="ChEBI" id="CHEBI:18420"/>
    </cofactor>
    <text evidence="1">Binds 1 Mg(2+) ion per subunit.</text>
</comment>
<comment type="subunit">
    <text evidence="1">Homodimer.</text>
</comment>
<comment type="similarity">
    <text evidence="2">Belongs to the RusA family.</text>
</comment>
<organism>
    <name type="scientific">Shigella sonnei (strain Ss046)</name>
    <dbReference type="NCBI Taxonomy" id="300269"/>
    <lineage>
        <taxon>Bacteria</taxon>
        <taxon>Pseudomonadati</taxon>
        <taxon>Pseudomonadota</taxon>
        <taxon>Gammaproteobacteria</taxon>
        <taxon>Enterobacterales</taxon>
        <taxon>Enterobacteriaceae</taxon>
        <taxon>Shigella</taxon>
    </lineage>
</organism>
<keyword id="KW-0227">DNA damage</keyword>
<keyword id="KW-0233">DNA recombination</keyword>
<keyword id="KW-0234">DNA repair</keyword>
<keyword id="KW-0255">Endonuclease</keyword>
<keyword id="KW-0378">Hydrolase</keyword>
<keyword id="KW-0460">Magnesium</keyword>
<keyword id="KW-0479">Metal-binding</keyword>
<keyword id="KW-0540">Nuclease</keyword>
<keyword id="KW-1185">Reference proteome</keyword>
<accession>Q3YZH8</accession>
<evidence type="ECO:0000250" key="1"/>
<evidence type="ECO:0000305" key="2"/>
<gene>
    <name type="primary">rusA</name>
    <name type="ordered locus">SSON_2443</name>
</gene>
<dbReference type="EC" id="3.1.21.10"/>
<dbReference type="EMBL" id="CP000038">
    <property type="protein sequence ID" value="AAZ89084.1"/>
    <property type="molecule type" value="Genomic_DNA"/>
</dbReference>
<dbReference type="RefSeq" id="WP_001099700.1">
    <property type="nucleotide sequence ID" value="NC_007384.1"/>
</dbReference>
<dbReference type="SMR" id="Q3YZH8"/>
<dbReference type="GeneID" id="93774785"/>
<dbReference type="KEGG" id="ssn:SSON_2443"/>
<dbReference type="HOGENOM" id="CLU_139466_0_2_6"/>
<dbReference type="Proteomes" id="UP000002529">
    <property type="component" value="Chromosome"/>
</dbReference>
<dbReference type="GO" id="GO:0008821">
    <property type="term" value="F:crossover junction DNA endonuclease activity"/>
    <property type="evidence" value="ECO:0007669"/>
    <property type="project" value="InterPro"/>
</dbReference>
<dbReference type="GO" id="GO:0000287">
    <property type="term" value="F:magnesium ion binding"/>
    <property type="evidence" value="ECO:0007669"/>
    <property type="project" value="InterPro"/>
</dbReference>
<dbReference type="GO" id="GO:0006310">
    <property type="term" value="P:DNA recombination"/>
    <property type="evidence" value="ECO:0007669"/>
    <property type="project" value="UniProtKB-KW"/>
</dbReference>
<dbReference type="GO" id="GO:0006281">
    <property type="term" value="P:DNA repair"/>
    <property type="evidence" value="ECO:0007669"/>
    <property type="project" value="UniProtKB-KW"/>
</dbReference>
<dbReference type="FunFam" id="3.30.1330.70:FF:000001">
    <property type="entry name" value="Crossover junction endodeoxyribonuclease RusA"/>
    <property type="match status" value="1"/>
</dbReference>
<dbReference type="Gene3D" id="3.30.1330.70">
    <property type="entry name" value="Holliday junction resolvase RusA"/>
    <property type="match status" value="1"/>
</dbReference>
<dbReference type="InterPro" id="IPR016281">
    <property type="entry name" value="Endonuclease_RusA"/>
</dbReference>
<dbReference type="InterPro" id="IPR008822">
    <property type="entry name" value="Endonuclease_RusA-like"/>
</dbReference>
<dbReference type="InterPro" id="IPR036614">
    <property type="entry name" value="RusA-like_sf"/>
</dbReference>
<dbReference type="NCBIfam" id="NF007305">
    <property type="entry name" value="PRK09786.1"/>
    <property type="match status" value="1"/>
</dbReference>
<dbReference type="Pfam" id="PF05866">
    <property type="entry name" value="RusA"/>
    <property type="match status" value="1"/>
</dbReference>
<dbReference type="PIRSF" id="PIRSF001007">
    <property type="entry name" value="RusA"/>
    <property type="match status" value="1"/>
</dbReference>
<dbReference type="SUPFAM" id="SSF103084">
    <property type="entry name" value="Holliday junction resolvase RusA"/>
    <property type="match status" value="1"/>
</dbReference>
<reference key="1">
    <citation type="journal article" date="2005" name="Nucleic Acids Res.">
        <title>Genome dynamics and diversity of Shigella species, the etiologic agents of bacillary dysentery.</title>
        <authorList>
            <person name="Yang F."/>
            <person name="Yang J."/>
            <person name="Zhang X."/>
            <person name="Chen L."/>
            <person name="Jiang Y."/>
            <person name="Yan Y."/>
            <person name="Tang X."/>
            <person name="Wang J."/>
            <person name="Xiong Z."/>
            <person name="Dong J."/>
            <person name="Xue Y."/>
            <person name="Zhu Y."/>
            <person name="Xu X."/>
            <person name="Sun L."/>
            <person name="Chen S."/>
            <person name="Nie H."/>
            <person name="Peng J."/>
            <person name="Xu J."/>
            <person name="Wang Y."/>
            <person name="Yuan Z."/>
            <person name="Wen Y."/>
            <person name="Yao Z."/>
            <person name="Shen Y."/>
            <person name="Qiang B."/>
            <person name="Hou Y."/>
            <person name="Yu J."/>
            <person name="Jin Q."/>
        </authorList>
    </citation>
    <scope>NUCLEOTIDE SEQUENCE [LARGE SCALE GENOMIC DNA]</scope>
    <source>
        <strain>Ss046</strain>
    </source>
</reference>
<proteinExistence type="inferred from homology"/>
<sequence length="120" mass="13890">MNTYSITLPWPPSNNRYYRHNRGRTHISAEGQAYRDNVTRIIKNAMLDIGLAMPVKIRIECHMPDRRRRDLDNLQKAAFDALTKAGFWLDDAQVVDYRVVKMPVTKGGRLELTITEMGNE</sequence>